<gene>
    <name evidence="1" type="primary">rpmJ</name>
    <name type="ordered locus">Nther_0219</name>
</gene>
<evidence type="ECO:0000255" key="1">
    <source>
        <dbReference type="HAMAP-Rule" id="MF_00251"/>
    </source>
</evidence>
<evidence type="ECO:0000305" key="2"/>
<protein>
    <recommendedName>
        <fullName evidence="1">Large ribosomal subunit protein bL36</fullName>
    </recommendedName>
    <alternativeName>
        <fullName evidence="2">50S ribosomal protein L36</fullName>
    </alternativeName>
</protein>
<sequence>MKTRPSVKPICERCKVIKRRGKVMVICSNPKHKQKQG</sequence>
<accession>B2A4G1</accession>
<organism>
    <name type="scientific">Natranaerobius thermophilus (strain ATCC BAA-1301 / DSM 18059 / JW/NM-WN-LF)</name>
    <dbReference type="NCBI Taxonomy" id="457570"/>
    <lineage>
        <taxon>Bacteria</taxon>
        <taxon>Bacillati</taxon>
        <taxon>Bacillota</taxon>
        <taxon>Clostridia</taxon>
        <taxon>Natranaerobiales</taxon>
        <taxon>Natranaerobiaceae</taxon>
        <taxon>Natranaerobius</taxon>
    </lineage>
</organism>
<keyword id="KW-1185">Reference proteome</keyword>
<keyword id="KW-0687">Ribonucleoprotein</keyword>
<keyword id="KW-0689">Ribosomal protein</keyword>
<comment type="similarity">
    <text evidence="1">Belongs to the bacterial ribosomal protein bL36 family.</text>
</comment>
<comment type="sequence caution" evidence="2">
    <conflict type="erroneous initiation">
        <sequence resource="EMBL-CDS" id="ACB83818"/>
    </conflict>
</comment>
<feature type="chain" id="PRO_0000344693" description="Large ribosomal subunit protein bL36">
    <location>
        <begin position="1"/>
        <end position="37"/>
    </location>
</feature>
<dbReference type="EMBL" id="CP001034">
    <property type="protein sequence ID" value="ACB83818.1"/>
    <property type="status" value="ALT_INIT"/>
    <property type="molecule type" value="Genomic_DNA"/>
</dbReference>
<dbReference type="RefSeq" id="WP_041366789.1">
    <property type="nucleotide sequence ID" value="NC_010718.1"/>
</dbReference>
<dbReference type="SMR" id="B2A4G1"/>
<dbReference type="FunCoup" id="B2A4G1">
    <property type="interactions" value="121"/>
</dbReference>
<dbReference type="STRING" id="457570.Nther_0219"/>
<dbReference type="KEGG" id="nth:Nther_0219"/>
<dbReference type="eggNOG" id="COG0257">
    <property type="taxonomic scope" value="Bacteria"/>
</dbReference>
<dbReference type="HOGENOM" id="CLU_135723_6_2_9"/>
<dbReference type="InParanoid" id="B2A4G1"/>
<dbReference type="OrthoDB" id="9802520at2"/>
<dbReference type="Proteomes" id="UP000001683">
    <property type="component" value="Chromosome"/>
</dbReference>
<dbReference type="GO" id="GO:0005737">
    <property type="term" value="C:cytoplasm"/>
    <property type="evidence" value="ECO:0007669"/>
    <property type="project" value="UniProtKB-ARBA"/>
</dbReference>
<dbReference type="GO" id="GO:1990904">
    <property type="term" value="C:ribonucleoprotein complex"/>
    <property type="evidence" value="ECO:0007669"/>
    <property type="project" value="UniProtKB-KW"/>
</dbReference>
<dbReference type="GO" id="GO:0005840">
    <property type="term" value="C:ribosome"/>
    <property type="evidence" value="ECO:0007669"/>
    <property type="project" value="UniProtKB-KW"/>
</dbReference>
<dbReference type="GO" id="GO:0003735">
    <property type="term" value="F:structural constituent of ribosome"/>
    <property type="evidence" value="ECO:0007669"/>
    <property type="project" value="InterPro"/>
</dbReference>
<dbReference type="GO" id="GO:0006412">
    <property type="term" value="P:translation"/>
    <property type="evidence" value="ECO:0007669"/>
    <property type="project" value="UniProtKB-UniRule"/>
</dbReference>
<dbReference type="HAMAP" id="MF_00251">
    <property type="entry name" value="Ribosomal_bL36"/>
    <property type="match status" value="1"/>
</dbReference>
<dbReference type="InterPro" id="IPR000473">
    <property type="entry name" value="Ribosomal_bL36"/>
</dbReference>
<dbReference type="InterPro" id="IPR035977">
    <property type="entry name" value="Ribosomal_bL36_sp"/>
</dbReference>
<dbReference type="NCBIfam" id="TIGR01022">
    <property type="entry name" value="rpmJ_bact"/>
    <property type="match status" value="1"/>
</dbReference>
<dbReference type="PANTHER" id="PTHR42888">
    <property type="entry name" value="50S RIBOSOMAL PROTEIN L36, CHLOROPLASTIC"/>
    <property type="match status" value="1"/>
</dbReference>
<dbReference type="PANTHER" id="PTHR42888:SF1">
    <property type="entry name" value="LARGE RIBOSOMAL SUBUNIT PROTEIN BL36C"/>
    <property type="match status" value="1"/>
</dbReference>
<dbReference type="Pfam" id="PF00444">
    <property type="entry name" value="Ribosomal_L36"/>
    <property type="match status" value="1"/>
</dbReference>
<dbReference type="SUPFAM" id="SSF57840">
    <property type="entry name" value="Ribosomal protein L36"/>
    <property type="match status" value="1"/>
</dbReference>
<dbReference type="PROSITE" id="PS00828">
    <property type="entry name" value="RIBOSOMAL_L36"/>
    <property type="match status" value="1"/>
</dbReference>
<proteinExistence type="inferred from homology"/>
<reference key="1">
    <citation type="submission" date="2008-04" db="EMBL/GenBank/DDBJ databases">
        <title>Complete sequence of chromosome of Natranaerobius thermophilus JW/NM-WN-LF.</title>
        <authorList>
            <consortium name="US DOE Joint Genome Institute"/>
            <person name="Copeland A."/>
            <person name="Lucas S."/>
            <person name="Lapidus A."/>
            <person name="Glavina del Rio T."/>
            <person name="Dalin E."/>
            <person name="Tice H."/>
            <person name="Bruce D."/>
            <person name="Goodwin L."/>
            <person name="Pitluck S."/>
            <person name="Chertkov O."/>
            <person name="Brettin T."/>
            <person name="Detter J.C."/>
            <person name="Han C."/>
            <person name="Kuske C.R."/>
            <person name="Schmutz J."/>
            <person name="Larimer F."/>
            <person name="Land M."/>
            <person name="Hauser L."/>
            <person name="Kyrpides N."/>
            <person name="Lykidis A."/>
            <person name="Mesbah N.M."/>
            <person name="Wiegel J."/>
        </authorList>
    </citation>
    <scope>NUCLEOTIDE SEQUENCE [LARGE SCALE GENOMIC DNA]</scope>
    <source>
        <strain>ATCC BAA-1301 / DSM 18059 / JW/NM-WN-LF</strain>
    </source>
</reference>
<name>RL36_NATTJ</name>